<evidence type="ECO:0000255" key="1">
    <source>
        <dbReference type="HAMAP-Rule" id="MF_00969"/>
    </source>
</evidence>
<protein>
    <recommendedName>
        <fullName evidence="1">Transcription-repair-coupling factor</fullName>
        <shortName evidence="1">TRCF</shortName>
        <ecNumber evidence="1">3.6.4.-</ecNumber>
    </recommendedName>
</protein>
<gene>
    <name evidence="1" type="primary">mfd</name>
    <name type="ordered locus">MW0458</name>
</gene>
<keyword id="KW-0067">ATP-binding</keyword>
<keyword id="KW-0963">Cytoplasm</keyword>
<keyword id="KW-0227">DNA damage</keyword>
<keyword id="KW-0234">DNA repair</keyword>
<keyword id="KW-0238">DNA-binding</keyword>
<keyword id="KW-0347">Helicase</keyword>
<keyword id="KW-0378">Hydrolase</keyword>
<keyword id="KW-0547">Nucleotide-binding</keyword>
<name>MFD_STAAW</name>
<proteinExistence type="inferred from homology"/>
<accession>Q8NXZ6</accession>
<reference key="1">
    <citation type="journal article" date="2002" name="Lancet">
        <title>Genome and virulence determinants of high virulence community-acquired MRSA.</title>
        <authorList>
            <person name="Baba T."/>
            <person name="Takeuchi F."/>
            <person name="Kuroda M."/>
            <person name="Yuzawa H."/>
            <person name="Aoki K."/>
            <person name="Oguchi A."/>
            <person name="Nagai Y."/>
            <person name="Iwama N."/>
            <person name="Asano K."/>
            <person name="Naimi T."/>
            <person name="Kuroda H."/>
            <person name="Cui L."/>
            <person name="Yamamoto K."/>
            <person name="Hiramatsu K."/>
        </authorList>
    </citation>
    <scope>NUCLEOTIDE SEQUENCE [LARGE SCALE GENOMIC DNA]</scope>
    <source>
        <strain>MW2</strain>
    </source>
</reference>
<feature type="chain" id="PRO_0000282672" description="Transcription-repair-coupling factor">
    <location>
        <begin position="1"/>
        <end position="1168"/>
    </location>
</feature>
<feature type="domain" description="Helicase ATP-binding" evidence="1">
    <location>
        <begin position="633"/>
        <end position="794"/>
    </location>
</feature>
<feature type="domain" description="Helicase C-terminal" evidence="1">
    <location>
        <begin position="808"/>
        <end position="969"/>
    </location>
</feature>
<feature type="short sequence motif" description="DEEQ box">
    <location>
        <begin position="747"/>
        <end position="750"/>
    </location>
</feature>
<feature type="binding site" evidence="1">
    <location>
        <begin position="646"/>
        <end position="653"/>
    </location>
    <ligand>
        <name>ATP</name>
        <dbReference type="ChEBI" id="CHEBI:30616"/>
    </ligand>
</feature>
<comment type="function">
    <text evidence="1">Couples transcription and DNA repair by recognizing RNA polymerase (RNAP) stalled at DNA lesions. Mediates ATP-dependent release of RNAP and its truncated transcript from the DNA, and recruitment of nucleotide excision repair machinery to the damaged site.</text>
</comment>
<comment type="subcellular location">
    <subcellularLocation>
        <location evidence="1">Cytoplasm</location>
    </subcellularLocation>
</comment>
<comment type="similarity">
    <text evidence="1">In the N-terminal section; belongs to the UvrB family.</text>
</comment>
<comment type="similarity">
    <text evidence="1">In the C-terminal section; belongs to the helicase family. RecG subfamily.</text>
</comment>
<organism>
    <name type="scientific">Staphylococcus aureus (strain MW2)</name>
    <dbReference type="NCBI Taxonomy" id="196620"/>
    <lineage>
        <taxon>Bacteria</taxon>
        <taxon>Bacillati</taxon>
        <taxon>Bacillota</taxon>
        <taxon>Bacilli</taxon>
        <taxon>Bacillales</taxon>
        <taxon>Staphylococcaceae</taxon>
        <taxon>Staphylococcus</taxon>
    </lineage>
</organism>
<sequence>MTILTTLIKEDNHFQDLNQVFGQANTLVTGLSPSAKVTMIAEKYAQSNQQLLLITNNLYQADKLETDLLQFIDAEELYKYPVQDIMTEEFSTQSPQLMSERIRTLTALAQGKKGLFIVPLNGLKKWLTPVEMWQNHQMTLRVGEDIDVDQFLNKLVNMGYKRESVVSHIGEFSLRGGIIDIFPLIGEPIRIELFDTKIDSIRDFDVETQRSKDNVEEVDITTASDYIITEEVISHLKEELKTAYENTRPKIDKSVRNDLKETYESFKLFESTYFDHQILRRLVAFMYETPSTIIEYFQKDAIIAVDEFNRIKETEESLTVESDSFISNIIESGNGFIGQSFIKYDDFETLIEGYPVTYFSLFATTMPIKLNHIIKFSCKPVQQFYGQYDIMRSEFQRYVNQNYHIVVLVETETKVERMQAMLSEMHIPSITKLHRSMSSGQAVIIEGSLSEGFELPDMGLVVITERELFKSKQKKQRKRTKAISNAEKIKSYQDLNVGDYIVHVHHGVGRYLGVETLEVGQTHRDYIKLQYKGTDQLFVPVDQMDQVQKYVASEDKTPKLNKLGGSEWKKTKAKVQQSVEDIAEELIDLYKEREMAEGYQYGEDTAEQTTFELDFPYELTPDQAKSIDEIKDDMQKSRPMDRLLCGDVGYGKTEVAVRAAFKAVMEGKQVAFLVPTTILAQQHYETLIERMQDFPVEIQLMSRFRTPKEIKQTKEGLKTGFVDIVVGTHKLLSKDIQYKDLGLLIVDEEQRFGVRHKERIKTLKHNVDVLTLTATPIPRTLHMSMLGVRDLSVIETPPENRFPVQTYVLEQNMSFIKEALERELSRDGQVFYLYNKVQSIYEKREQLQMLMPDANIAVAHGQMTERDLEETMLSFINNEYDILVTTTIIETGVDVPNANTLIIEDADRFGLSQLYQLRGRVGRSSRIGYAYFLHPANKVLTETAEDRLQAIKEFTELGSGFKIAMRDLNIRGAGNLLGKQQHGFIDTVGFDLYSQMLEEAVNEKRGIKEPESEVPEVEVDLNLDAYLPTEYIANEQAKIEIYKKLRKTETFDQIIDIKDELIDRFNDYPVEVARLLDIVEIKVHALHSGITLIKDKGKIIDIHLSVKATENIDGEVLFKATQPLGRTMKVGVQNNAMTITLTKQNQWLDSLKFLVKCIEESMRISDEA</sequence>
<dbReference type="EC" id="3.6.4.-" evidence="1"/>
<dbReference type="EMBL" id="BA000033">
    <property type="protein sequence ID" value="BAB94323.1"/>
    <property type="molecule type" value="Genomic_DNA"/>
</dbReference>
<dbReference type="RefSeq" id="WP_000154236.1">
    <property type="nucleotide sequence ID" value="NC_003923.1"/>
</dbReference>
<dbReference type="SMR" id="Q8NXZ6"/>
<dbReference type="KEGG" id="sam:MW0458"/>
<dbReference type="HOGENOM" id="CLU_005122_1_3_9"/>
<dbReference type="GO" id="GO:0005737">
    <property type="term" value="C:cytoplasm"/>
    <property type="evidence" value="ECO:0007669"/>
    <property type="project" value="UniProtKB-SubCell"/>
</dbReference>
<dbReference type="GO" id="GO:0005524">
    <property type="term" value="F:ATP binding"/>
    <property type="evidence" value="ECO:0007669"/>
    <property type="project" value="UniProtKB-UniRule"/>
</dbReference>
<dbReference type="GO" id="GO:0003684">
    <property type="term" value="F:damaged DNA binding"/>
    <property type="evidence" value="ECO:0007669"/>
    <property type="project" value="InterPro"/>
</dbReference>
<dbReference type="GO" id="GO:0003678">
    <property type="term" value="F:DNA helicase activity"/>
    <property type="evidence" value="ECO:0007669"/>
    <property type="project" value="TreeGrafter"/>
</dbReference>
<dbReference type="GO" id="GO:0016787">
    <property type="term" value="F:hydrolase activity"/>
    <property type="evidence" value="ECO:0007669"/>
    <property type="project" value="UniProtKB-KW"/>
</dbReference>
<dbReference type="GO" id="GO:0006355">
    <property type="term" value="P:regulation of DNA-templated transcription"/>
    <property type="evidence" value="ECO:0007669"/>
    <property type="project" value="UniProtKB-UniRule"/>
</dbReference>
<dbReference type="GO" id="GO:0000716">
    <property type="term" value="P:transcription-coupled nucleotide-excision repair, DNA damage recognition"/>
    <property type="evidence" value="ECO:0007669"/>
    <property type="project" value="UniProtKB-UniRule"/>
</dbReference>
<dbReference type="CDD" id="cd17991">
    <property type="entry name" value="DEXHc_TRCF"/>
    <property type="match status" value="1"/>
</dbReference>
<dbReference type="FunFam" id="3.40.50.300:FF:000546">
    <property type="entry name" value="Transcription-repair-coupling factor"/>
    <property type="match status" value="1"/>
</dbReference>
<dbReference type="Gene3D" id="2.40.10.170">
    <property type="match status" value="1"/>
</dbReference>
<dbReference type="Gene3D" id="3.40.50.11140">
    <property type="match status" value="1"/>
</dbReference>
<dbReference type="Gene3D" id="3.40.50.11180">
    <property type="match status" value="1"/>
</dbReference>
<dbReference type="Gene3D" id="3.40.50.300">
    <property type="entry name" value="P-loop containing nucleotide triphosphate hydrolases"/>
    <property type="match status" value="2"/>
</dbReference>
<dbReference type="Gene3D" id="3.30.2060.10">
    <property type="entry name" value="Penicillin-binding protein 1b domain"/>
    <property type="match status" value="1"/>
</dbReference>
<dbReference type="Gene3D" id="3.90.1150.50">
    <property type="entry name" value="Transcription-repair-coupling factor, D7 domain"/>
    <property type="match status" value="1"/>
</dbReference>
<dbReference type="HAMAP" id="MF_00969">
    <property type="entry name" value="TRCF"/>
    <property type="match status" value="1"/>
</dbReference>
<dbReference type="InterPro" id="IPR003711">
    <property type="entry name" value="CarD-like/TRCF_RID"/>
</dbReference>
<dbReference type="InterPro" id="IPR036101">
    <property type="entry name" value="CarD-like/TRCF_RID_sf"/>
</dbReference>
<dbReference type="InterPro" id="IPR011545">
    <property type="entry name" value="DEAD/DEAH_box_helicase_dom"/>
</dbReference>
<dbReference type="InterPro" id="IPR014001">
    <property type="entry name" value="Helicase_ATP-bd"/>
</dbReference>
<dbReference type="InterPro" id="IPR001650">
    <property type="entry name" value="Helicase_C-like"/>
</dbReference>
<dbReference type="InterPro" id="IPR004576">
    <property type="entry name" value="Mfd"/>
</dbReference>
<dbReference type="InterPro" id="IPR048635">
    <property type="entry name" value="MFD_D3"/>
</dbReference>
<dbReference type="InterPro" id="IPR027417">
    <property type="entry name" value="P-loop_NTPase"/>
</dbReference>
<dbReference type="InterPro" id="IPR047112">
    <property type="entry name" value="RecG/Mfd"/>
</dbReference>
<dbReference type="InterPro" id="IPR037235">
    <property type="entry name" value="TRCF-like_C_D7"/>
</dbReference>
<dbReference type="InterPro" id="IPR005118">
    <property type="entry name" value="TRCF_C"/>
</dbReference>
<dbReference type="InterPro" id="IPR041471">
    <property type="entry name" value="UvrB_inter"/>
</dbReference>
<dbReference type="NCBIfam" id="TIGR00580">
    <property type="entry name" value="mfd"/>
    <property type="match status" value="1"/>
</dbReference>
<dbReference type="PANTHER" id="PTHR47964">
    <property type="entry name" value="ATP-DEPENDENT DNA HELICASE HOMOLOG RECG, CHLOROPLASTIC"/>
    <property type="match status" value="1"/>
</dbReference>
<dbReference type="PANTHER" id="PTHR47964:SF1">
    <property type="entry name" value="ATP-DEPENDENT DNA HELICASE HOMOLOG RECG, CHLOROPLASTIC"/>
    <property type="match status" value="1"/>
</dbReference>
<dbReference type="Pfam" id="PF02559">
    <property type="entry name" value="CarD_TRCF_RID"/>
    <property type="match status" value="1"/>
</dbReference>
<dbReference type="Pfam" id="PF00270">
    <property type="entry name" value="DEAD"/>
    <property type="match status" value="1"/>
</dbReference>
<dbReference type="Pfam" id="PF00271">
    <property type="entry name" value="Helicase_C"/>
    <property type="match status" value="1"/>
</dbReference>
<dbReference type="Pfam" id="PF21132">
    <property type="entry name" value="MFD_D3"/>
    <property type="match status" value="1"/>
</dbReference>
<dbReference type="Pfam" id="PF03461">
    <property type="entry name" value="TRCF"/>
    <property type="match status" value="1"/>
</dbReference>
<dbReference type="Pfam" id="PF17757">
    <property type="entry name" value="UvrB_inter"/>
    <property type="match status" value="1"/>
</dbReference>
<dbReference type="SMART" id="SM01058">
    <property type="entry name" value="CarD_TRCF"/>
    <property type="match status" value="1"/>
</dbReference>
<dbReference type="SMART" id="SM00487">
    <property type="entry name" value="DEXDc"/>
    <property type="match status" value="1"/>
</dbReference>
<dbReference type="SMART" id="SM00490">
    <property type="entry name" value="HELICc"/>
    <property type="match status" value="1"/>
</dbReference>
<dbReference type="SMART" id="SM00982">
    <property type="entry name" value="TRCF"/>
    <property type="match status" value="1"/>
</dbReference>
<dbReference type="SUPFAM" id="SSF141259">
    <property type="entry name" value="CarD-like"/>
    <property type="match status" value="1"/>
</dbReference>
<dbReference type="SUPFAM" id="SSF52540">
    <property type="entry name" value="P-loop containing nucleoside triphosphate hydrolases"/>
    <property type="match status" value="4"/>
</dbReference>
<dbReference type="SUPFAM" id="SSF143517">
    <property type="entry name" value="TRCF domain-like"/>
    <property type="match status" value="1"/>
</dbReference>
<dbReference type="PROSITE" id="PS51192">
    <property type="entry name" value="HELICASE_ATP_BIND_1"/>
    <property type="match status" value="1"/>
</dbReference>
<dbReference type="PROSITE" id="PS51194">
    <property type="entry name" value="HELICASE_CTER"/>
    <property type="match status" value="1"/>
</dbReference>